<feature type="chain" id="PRO_0000316845" description="Protein prenyltransferase alpha subunit repeat-containing protein 1-A">
    <location>
        <begin position="1"/>
        <end position="432"/>
    </location>
</feature>
<feature type="repeat" description="PFTA 1">
    <location>
        <begin position="86"/>
        <end position="119"/>
    </location>
</feature>
<feature type="repeat" description="PFTA 2">
    <location>
        <begin position="121"/>
        <end position="154"/>
    </location>
</feature>
<feature type="repeat" description="PFTA 3">
    <location>
        <begin position="179"/>
        <end position="212"/>
    </location>
</feature>
<feature type="repeat" description="PFTA 4">
    <location>
        <begin position="218"/>
        <end position="251"/>
    </location>
</feature>
<feature type="repeat" description="PFTA 5">
    <location>
        <begin position="294"/>
        <end position="327"/>
    </location>
</feature>
<feature type="repeat" description="PFTA 6">
    <location>
        <begin position="395"/>
        <end position="432"/>
    </location>
</feature>
<proteinExistence type="evidence at transcript level"/>
<reference key="1">
    <citation type="submission" date="2006-09" db="EMBL/GenBank/DDBJ databases">
        <authorList>
            <consortium name="NIH - Xenopus Gene Collection (XGC) project"/>
        </authorList>
    </citation>
    <scope>NUCLEOTIDE SEQUENCE [LARGE SCALE MRNA]</scope>
    <source>
        <tissue>Embryo</tissue>
    </source>
</reference>
<keyword id="KW-0637">Prenyltransferase</keyword>
<keyword id="KW-1185">Reference proteome</keyword>
<keyword id="KW-0677">Repeat</keyword>
<keyword id="KW-0808">Transferase</keyword>
<gene>
    <name type="primary">ptar1-a</name>
</gene>
<accession>Q0IHB3</accession>
<protein>
    <recommendedName>
        <fullName>Protein prenyltransferase alpha subunit repeat-containing protein 1-A</fullName>
    </recommendedName>
</protein>
<evidence type="ECO:0000305" key="1"/>
<name>PTR1A_XENLA</name>
<dbReference type="EMBL" id="BC123230">
    <property type="protein sequence ID" value="AAI23231.1"/>
    <property type="molecule type" value="mRNA"/>
</dbReference>
<dbReference type="RefSeq" id="NP_001090356.1">
    <property type="nucleotide sequence ID" value="NM_001096887.1"/>
</dbReference>
<dbReference type="SMR" id="Q0IHB3"/>
<dbReference type="DNASU" id="779267"/>
<dbReference type="GeneID" id="779267"/>
<dbReference type="KEGG" id="xla:779267"/>
<dbReference type="AGR" id="Xenbase:XB-GENE-5829656"/>
<dbReference type="CTD" id="779267"/>
<dbReference type="Xenbase" id="XB-GENE-5829656">
    <property type="gene designation" value="ptar1.L"/>
</dbReference>
<dbReference type="OMA" id="ETWIHRW"/>
<dbReference type="OrthoDB" id="5358702at2759"/>
<dbReference type="Proteomes" id="UP000186698">
    <property type="component" value="Chromosome 1L"/>
</dbReference>
<dbReference type="Bgee" id="779267">
    <property type="expression patterns" value="Expressed in egg cell and 19 other cell types or tissues"/>
</dbReference>
<dbReference type="GO" id="GO:0005737">
    <property type="term" value="C:cytoplasm"/>
    <property type="evidence" value="ECO:0000318"/>
    <property type="project" value="GO_Central"/>
</dbReference>
<dbReference type="GO" id="GO:0008318">
    <property type="term" value="F:protein prenyltransferase activity"/>
    <property type="evidence" value="ECO:0007669"/>
    <property type="project" value="InterPro"/>
</dbReference>
<dbReference type="FunFam" id="1.25.40.120:FF:000012">
    <property type="entry name" value="Protein prenyltransferase alpha subunit repeat containing 1"/>
    <property type="match status" value="1"/>
</dbReference>
<dbReference type="Gene3D" id="1.25.40.120">
    <property type="entry name" value="Protein prenylyltransferase"/>
    <property type="match status" value="1"/>
</dbReference>
<dbReference type="InterPro" id="IPR002088">
    <property type="entry name" value="Prenyl_trans_a"/>
</dbReference>
<dbReference type="PANTHER" id="PTHR11129">
    <property type="entry name" value="PROTEIN FARNESYLTRANSFERASE ALPHA SUBUNIT/RAB GERANYLGERANYL TRANSFERASE ALPHA SUBUNIT"/>
    <property type="match status" value="1"/>
</dbReference>
<dbReference type="PANTHER" id="PTHR11129:SF3">
    <property type="entry name" value="PROTEIN PRENYLTRANSFERASE ALPHA SUBUNIT REPEAT-CONTAINING PROTEIN 1"/>
    <property type="match status" value="1"/>
</dbReference>
<dbReference type="Pfam" id="PF01239">
    <property type="entry name" value="PPTA"/>
    <property type="match status" value="4"/>
</dbReference>
<dbReference type="SUPFAM" id="SSF48439">
    <property type="entry name" value="Protein prenylyltransferase"/>
    <property type="match status" value="1"/>
</dbReference>
<dbReference type="PROSITE" id="PS51147">
    <property type="entry name" value="PFTA"/>
    <property type="match status" value="6"/>
</dbReference>
<comment type="similarity">
    <text evidence="1">Belongs to the protein prenyltransferase subunit alpha family.</text>
</comment>
<sequence length="432" mass="49691">MAEWKEEVEVLVQRVVKDITGAFRRNPNIDEIGLIPCPEAKYNRSPIVLVENKLGVESWCIKFLLPYVHNKLLLYRQKKLWLNRDELIDVTCTLLLLNPDFTTAWNVRKELIQSGTLNPVKDLQLGKLALTKFPKSPETWIHRRWALQRLVQELVVAAVVDKDAICPETSERIQAIVEEEMHVCCEAAGRYPSNYNSWSHRIWVVQHLGNLKATLLIDELSSTKHWVSMHVSDHSGFHYRQFLLKSLLSKTLKDFDNVGAITDLIANEENLCLPRDGEANWNQICFDLPYLLEEEMDLNRELVDSFPGHETLWCHRRQIFNLIHQLLLEQSQSATPQSTSASIPDGSGNISQMSTTFQSYVTNPMDIDGMSDPNKQGYTQEIKRLKRAPVQDSLSFDSELRFINCVLTNCCSPEQSRFAASYRKWLLSLQGH</sequence>
<organism>
    <name type="scientific">Xenopus laevis</name>
    <name type="common">African clawed frog</name>
    <dbReference type="NCBI Taxonomy" id="8355"/>
    <lineage>
        <taxon>Eukaryota</taxon>
        <taxon>Metazoa</taxon>
        <taxon>Chordata</taxon>
        <taxon>Craniata</taxon>
        <taxon>Vertebrata</taxon>
        <taxon>Euteleostomi</taxon>
        <taxon>Amphibia</taxon>
        <taxon>Batrachia</taxon>
        <taxon>Anura</taxon>
        <taxon>Pipoidea</taxon>
        <taxon>Pipidae</taxon>
        <taxon>Xenopodinae</taxon>
        <taxon>Xenopus</taxon>
        <taxon>Xenopus</taxon>
    </lineage>
</organism>